<feature type="chain" id="PRO_0000190850" description="Probable endonuclease 4">
    <location>
        <begin position="1"/>
        <end position="252"/>
    </location>
</feature>
<feature type="binding site" evidence="1">
    <location>
        <position position="56"/>
    </location>
    <ligand>
        <name>Zn(2+)</name>
        <dbReference type="ChEBI" id="CHEBI:29105"/>
        <label>1</label>
    </ligand>
</feature>
<feature type="binding site" evidence="1">
    <location>
        <position position="96"/>
    </location>
    <ligand>
        <name>Zn(2+)</name>
        <dbReference type="ChEBI" id="CHEBI:29105"/>
        <label>1</label>
    </ligand>
</feature>
<feature type="binding site" evidence="1">
    <location>
        <position position="129"/>
    </location>
    <ligand>
        <name>Zn(2+)</name>
        <dbReference type="ChEBI" id="CHEBI:29105"/>
        <label>1</label>
    </ligand>
</feature>
<feature type="binding site" evidence="1">
    <location>
        <position position="129"/>
    </location>
    <ligand>
        <name>Zn(2+)</name>
        <dbReference type="ChEBI" id="CHEBI:29105"/>
        <label>2</label>
    </ligand>
</feature>
<feature type="binding site" evidence="1">
    <location>
        <position position="162"/>
    </location>
    <ligand>
        <name>Zn(2+)</name>
        <dbReference type="ChEBI" id="CHEBI:29105"/>
        <label>2</label>
    </ligand>
</feature>
<feature type="binding site" evidence="1">
    <location>
        <position position="165"/>
    </location>
    <ligand>
        <name>Zn(2+)</name>
        <dbReference type="ChEBI" id="CHEBI:29105"/>
        <label>3</label>
    </ligand>
</feature>
<feature type="binding site" evidence="1">
    <location>
        <position position="191"/>
    </location>
    <ligand>
        <name>Zn(2+)</name>
        <dbReference type="ChEBI" id="CHEBI:29105"/>
        <label>2</label>
    </ligand>
</feature>
<feature type="binding site" evidence="1">
    <location>
        <position position="204"/>
    </location>
    <ligand>
        <name>Zn(2+)</name>
        <dbReference type="ChEBI" id="CHEBI:29105"/>
        <label>3</label>
    </ligand>
</feature>
<feature type="binding site" evidence="1">
    <location>
        <position position="206"/>
    </location>
    <ligand>
        <name>Zn(2+)</name>
        <dbReference type="ChEBI" id="CHEBI:29105"/>
        <label>3</label>
    </ligand>
</feature>
<feature type="binding site" evidence="1">
    <location>
        <position position="233"/>
    </location>
    <ligand>
        <name>Zn(2+)</name>
        <dbReference type="ChEBI" id="CHEBI:29105"/>
        <label>2</label>
    </ligand>
</feature>
<gene>
    <name evidence="1" type="primary">nfo</name>
    <name type="synonym">end</name>
    <name type="ordered locus">BQ2027_MB0689</name>
</gene>
<reference key="1">
    <citation type="journal article" date="2003" name="Proc. Natl. Acad. Sci. U.S.A.">
        <title>The complete genome sequence of Mycobacterium bovis.</title>
        <authorList>
            <person name="Garnier T."/>
            <person name="Eiglmeier K."/>
            <person name="Camus J.-C."/>
            <person name="Medina N."/>
            <person name="Mansoor H."/>
            <person name="Pryor M."/>
            <person name="Duthoy S."/>
            <person name="Grondin S."/>
            <person name="Lacroix C."/>
            <person name="Monsempe C."/>
            <person name="Simon S."/>
            <person name="Harris B."/>
            <person name="Atkin R."/>
            <person name="Doggett J."/>
            <person name="Mayes R."/>
            <person name="Keating L."/>
            <person name="Wheeler P.R."/>
            <person name="Parkhill J."/>
            <person name="Barrell B.G."/>
            <person name="Cole S.T."/>
            <person name="Gordon S.V."/>
            <person name="Hewinson R.G."/>
        </authorList>
    </citation>
    <scope>NUCLEOTIDE SEQUENCE [LARGE SCALE GENOMIC DNA]</scope>
    <source>
        <strain>ATCC BAA-935 / AF2122/97</strain>
    </source>
</reference>
<reference key="2">
    <citation type="journal article" date="2017" name="Genome Announc.">
        <title>Updated reference genome sequence and annotation of Mycobacterium bovis AF2122/97.</title>
        <authorList>
            <person name="Malone K.M."/>
            <person name="Farrell D."/>
            <person name="Stuber T.P."/>
            <person name="Schubert O.T."/>
            <person name="Aebersold R."/>
            <person name="Robbe-Austerman S."/>
            <person name="Gordon S.V."/>
        </authorList>
    </citation>
    <scope>NUCLEOTIDE SEQUENCE [LARGE SCALE GENOMIC DNA]</scope>
    <scope>GENOME REANNOTATION</scope>
    <source>
        <strain>ATCC BAA-935 / AF2122/97</strain>
    </source>
</reference>
<comment type="function">
    <text evidence="1">Endonuclease IV plays a role in DNA repair. It cleaves phosphodiester bonds at apurinic or apyrimidinic (AP) sites, generating a 3'-hydroxyl group and a 5'-terminal sugar phosphate.</text>
</comment>
<comment type="catalytic activity">
    <reaction evidence="1">
        <text>Endonucleolytic cleavage to 5'-phosphooligonucleotide end-products.</text>
        <dbReference type="EC" id="3.1.21.2"/>
    </reaction>
</comment>
<comment type="cofactor">
    <cofactor evidence="1">
        <name>Zn(2+)</name>
        <dbReference type="ChEBI" id="CHEBI:29105"/>
    </cofactor>
    <text evidence="1">Binds 3 Zn(2+) ions.</text>
</comment>
<comment type="similarity">
    <text evidence="1">Belongs to the AP endonuclease 2 family.</text>
</comment>
<dbReference type="EC" id="3.1.21.2" evidence="1"/>
<dbReference type="EMBL" id="LT708304">
    <property type="protein sequence ID" value="SIT99287.1"/>
    <property type="molecule type" value="Genomic_DNA"/>
</dbReference>
<dbReference type="RefSeq" id="NP_854347.1">
    <property type="nucleotide sequence ID" value="NC_002945.3"/>
</dbReference>
<dbReference type="RefSeq" id="WP_003403419.1">
    <property type="nucleotide sequence ID" value="NC_002945.4"/>
</dbReference>
<dbReference type="SMR" id="P63536"/>
<dbReference type="KEGG" id="mbo:BQ2027_MB0689"/>
<dbReference type="PATRIC" id="fig|233413.5.peg.751"/>
<dbReference type="Proteomes" id="UP000001419">
    <property type="component" value="Chromosome"/>
</dbReference>
<dbReference type="GO" id="GO:0008833">
    <property type="term" value="F:deoxyribonuclease IV (phage-T4-induced) activity"/>
    <property type="evidence" value="ECO:0007669"/>
    <property type="project" value="UniProtKB-UniRule"/>
</dbReference>
<dbReference type="GO" id="GO:0003677">
    <property type="term" value="F:DNA binding"/>
    <property type="evidence" value="ECO:0007669"/>
    <property type="project" value="InterPro"/>
</dbReference>
<dbReference type="GO" id="GO:0003906">
    <property type="term" value="F:DNA-(apurinic or apyrimidinic site) endonuclease activity"/>
    <property type="evidence" value="ECO:0007669"/>
    <property type="project" value="TreeGrafter"/>
</dbReference>
<dbReference type="GO" id="GO:0008081">
    <property type="term" value="F:phosphoric diester hydrolase activity"/>
    <property type="evidence" value="ECO:0007669"/>
    <property type="project" value="TreeGrafter"/>
</dbReference>
<dbReference type="GO" id="GO:0008270">
    <property type="term" value="F:zinc ion binding"/>
    <property type="evidence" value="ECO:0007669"/>
    <property type="project" value="UniProtKB-UniRule"/>
</dbReference>
<dbReference type="GO" id="GO:0006284">
    <property type="term" value="P:base-excision repair"/>
    <property type="evidence" value="ECO:0007669"/>
    <property type="project" value="TreeGrafter"/>
</dbReference>
<dbReference type="CDD" id="cd00019">
    <property type="entry name" value="AP2Ec"/>
    <property type="match status" value="1"/>
</dbReference>
<dbReference type="FunFam" id="3.20.20.150:FF:000019">
    <property type="entry name" value="Probable endonuclease 4"/>
    <property type="match status" value="1"/>
</dbReference>
<dbReference type="Gene3D" id="3.20.20.150">
    <property type="entry name" value="Divalent-metal-dependent TIM barrel enzymes"/>
    <property type="match status" value="1"/>
</dbReference>
<dbReference type="HAMAP" id="MF_00152">
    <property type="entry name" value="Nfo"/>
    <property type="match status" value="1"/>
</dbReference>
<dbReference type="InterPro" id="IPR001719">
    <property type="entry name" value="AP_endonuc_2"/>
</dbReference>
<dbReference type="InterPro" id="IPR018246">
    <property type="entry name" value="AP_endonuc_F2_Zn_BS"/>
</dbReference>
<dbReference type="InterPro" id="IPR036237">
    <property type="entry name" value="Xyl_isomerase-like_sf"/>
</dbReference>
<dbReference type="InterPro" id="IPR013022">
    <property type="entry name" value="Xyl_isomerase-like_TIM-brl"/>
</dbReference>
<dbReference type="NCBIfam" id="NF002198">
    <property type="entry name" value="PRK01060.1-3"/>
    <property type="match status" value="1"/>
</dbReference>
<dbReference type="PANTHER" id="PTHR21445:SF0">
    <property type="entry name" value="APURINIC-APYRIMIDINIC ENDONUCLEASE"/>
    <property type="match status" value="1"/>
</dbReference>
<dbReference type="PANTHER" id="PTHR21445">
    <property type="entry name" value="ENDONUCLEASE IV ENDODEOXYRIBONUCLEASE IV"/>
    <property type="match status" value="1"/>
</dbReference>
<dbReference type="Pfam" id="PF01261">
    <property type="entry name" value="AP_endonuc_2"/>
    <property type="match status" value="1"/>
</dbReference>
<dbReference type="SMART" id="SM00518">
    <property type="entry name" value="AP2Ec"/>
    <property type="match status" value="1"/>
</dbReference>
<dbReference type="SUPFAM" id="SSF51658">
    <property type="entry name" value="Xylose isomerase-like"/>
    <property type="match status" value="1"/>
</dbReference>
<dbReference type="PROSITE" id="PS00729">
    <property type="entry name" value="AP_NUCLEASE_F2_1"/>
    <property type="match status" value="1"/>
</dbReference>
<dbReference type="PROSITE" id="PS00730">
    <property type="entry name" value="AP_NUCLEASE_F2_2"/>
    <property type="match status" value="1"/>
</dbReference>
<dbReference type="PROSITE" id="PS00731">
    <property type="entry name" value="AP_NUCLEASE_F2_3"/>
    <property type="match status" value="1"/>
</dbReference>
<dbReference type="PROSITE" id="PS51432">
    <property type="entry name" value="AP_NUCLEASE_F2_4"/>
    <property type="match status" value="1"/>
</dbReference>
<protein>
    <recommendedName>
        <fullName evidence="1">Probable endonuclease 4</fullName>
        <ecNumber evidence="1">3.1.21.2</ecNumber>
    </recommendedName>
    <alternativeName>
        <fullName evidence="1">Endodeoxyribonuclease IV</fullName>
    </alternativeName>
    <alternativeName>
        <fullName evidence="1">Endonuclease IV</fullName>
    </alternativeName>
</protein>
<sequence length="252" mass="26845">MLIGSHVSPTDPLAAAEAEGADVVQIFLGNPQSWKAPKPRDDAAALKAATLPIYVHAPYLINLASANNRVRIPSRKILQETCAAAADIGAAAVIVHGGHVADDNDIDKGFQRWRKALDRLETEVPVYLENTAGGDHAMARRFDTIARLWDVIGDTGIGFCLDTCHTWAAGEALTDAVDRIKAITGRIDLVHCNDSRDEAGSGRDRHANLGSGQIDPDLLVAAVKAAGAPVICETADQGRKDDIAFLRERTGS</sequence>
<proteinExistence type="inferred from homology"/>
<name>END4_MYCBO</name>
<organism>
    <name type="scientific">Mycobacterium bovis (strain ATCC BAA-935 / AF2122/97)</name>
    <dbReference type="NCBI Taxonomy" id="233413"/>
    <lineage>
        <taxon>Bacteria</taxon>
        <taxon>Bacillati</taxon>
        <taxon>Actinomycetota</taxon>
        <taxon>Actinomycetes</taxon>
        <taxon>Mycobacteriales</taxon>
        <taxon>Mycobacteriaceae</taxon>
        <taxon>Mycobacterium</taxon>
        <taxon>Mycobacterium tuberculosis complex</taxon>
    </lineage>
</organism>
<accession>P63536</accession>
<accession>A0A1R3XW52</accession>
<accession>O86366</accession>
<accession>X2BFK7</accession>
<keyword id="KW-0227">DNA damage</keyword>
<keyword id="KW-0234">DNA repair</keyword>
<keyword id="KW-0255">Endonuclease</keyword>
<keyword id="KW-0378">Hydrolase</keyword>
<keyword id="KW-0479">Metal-binding</keyword>
<keyword id="KW-0540">Nuclease</keyword>
<keyword id="KW-1185">Reference proteome</keyword>
<keyword id="KW-0862">Zinc</keyword>
<evidence type="ECO:0000255" key="1">
    <source>
        <dbReference type="HAMAP-Rule" id="MF_00152"/>
    </source>
</evidence>